<proteinExistence type="predicted"/>
<organism>
    <name type="scientific">Caenorhabditis elegans</name>
    <dbReference type="NCBI Taxonomy" id="6239"/>
    <lineage>
        <taxon>Eukaryota</taxon>
        <taxon>Metazoa</taxon>
        <taxon>Ecdysozoa</taxon>
        <taxon>Nematoda</taxon>
        <taxon>Chromadorea</taxon>
        <taxon>Rhabditida</taxon>
        <taxon>Rhabditina</taxon>
        <taxon>Rhabditomorpha</taxon>
        <taxon>Rhabditoidea</taxon>
        <taxon>Rhabditidae</taxon>
        <taxon>Peloderinae</taxon>
        <taxon>Caenorhabditis</taxon>
    </lineage>
</organism>
<dbReference type="EMBL" id="FO081735">
    <property type="protein sequence ID" value="CCD73738.1"/>
    <property type="molecule type" value="Genomic_DNA"/>
</dbReference>
<dbReference type="PIR" id="T16890">
    <property type="entry name" value="T16890"/>
</dbReference>
<dbReference type="RefSeq" id="NP_497223.2">
    <property type="nucleotide sequence ID" value="NM_064822.2"/>
</dbReference>
<dbReference type="PaxDb" id="6239-T19C3.6"/>
<dbReference type="EnsemblMetazoa" id="T19C3.6.1">
    <property type="protein sequence ID" value="T19C3.6.1"/>
    <property type="gene ID" value="WBGene00020564"/>
</dbReference>
<dbReference type="GeneID" id="188588"/>
<dbReference type="KEGG" id="cel:CELE_T19C3.6"/>
<dbReference type="UCSC" id="T19C3.6">
    <property type="organism name" value="c. elegans"/>
</dbReference>
<dbReference type="AGR" id="WB:WBGene00020564"/>
<dbReference type="CTD" id="188588"/>
<dbReference type="WormBase" id="T19C3.6">
    <property type="protein sequence ID" value="CE32726"/>
    <property type="gene ID" value="WBGene00020564"/>
</dbReference>
<dbReference type="HOGENOM" id="CLU_1361527_0_0_1"/>
<dbReference type="InParanoid" id="Q10012"/>
<dbReference type="PRO" id="PR:Q10012"/>
<dbReference type="Proteomes" id="UP000001940">
    <property type="component" value="Chromosome III"/>
</dbReference>
<dbReference type="Bgee" id="WBGene00020564">
    <property type="expression patterns" value="Expressed in pharyngeal muscle cell (C elegans) and 2 other cell types or tissues"/>
</dbReference>
<feature type="chain" id="PRO_0000065471" description="Uncharacterized protein T19C3.6">
    <location>
        <begin position="1"/>
        <end position="201"/>
    </location>
</feature>
<gene>
    <name type="ORF">T19C3.6</name>
</gene>
<protein>
    <recommendedName>
        <fullName>Uncharacterized protein T19C3.6</fullName>
    </recommendedName>
</protein>
<name>YSV6_CAEEL</name>
<sequence>MGLVTSILGRREYRLLQNSVTKKHLCKFMGVEFDYNDLDEITEIRVGENIFDTFESYARFAMKDTMKSIFAECKAMKTCLARIEREKQTEASMNHKIRQCYITLRRLCQLYYKFYQDLEKLKIPEHAWNVPLVKKAEKSIVVLDHAIYKFKAKGNLDVKKFREEVSHQYNIIEEVLKQFKSMDEGEYVEMRMKEEMKTEEA</sequence>
<keyword id="KW-1185">Reference proteome</keyword>
<reference key="1">
    <citation type="journal article" date="1998" name="Science">
        <title>Genome sequence of the nematode C. elegans: a platform for investigating biology.</title>
        <authorList>
            <consortium name="The C. elegans sequencing consortium"/>
        </authorList>
    </citation>
    <scope>NUCLEOTIDE SEQUENCE [LARGE SCALE GENOMIC DNA]</scope>
    <source>
        <strain>Bristol N2</strain>
    </source>
</reference>
<accession>Q10012</accession>